<reference key="1">
    <citation type="journal article" date="2008" name="Proc. Natl. Acad. Sci. U.S.A.">
        <title>The genome of Cyanothece 51142, a unicellular diazotrophic cyanobacterium important in the marine nitrogen cycle.</title>
        <authorList>
            <person name="Welsh E.A."/>
            <person name="Liberton M."/>
            <person name="Stoeckel J."/>
            <person name="Loh T."/>
            <person name="Elvitigala T."/>
            <person name="Wang C."/>
            <person name="Wollam A."/>
            <person name="Fulton R.S."/>
            <person name="Clifton S.W."/>
            <person name="Jacobs J.M."/>
            <person name="Aurora R."/>
            <person name="Ghosh B.K."/>
            <person name="Sherman L.A."/>
            <person name="Smith R.D."/>
            <person name="Wilson R.K."/>
            <person name="Pakrasi H.B."/>
        </authorList>
    </citation>
    <scope>NUCLEOTIDE SEQUENCE [LARGE SCALE GENOMIC DNA]</scope>
    <source>
        <strain>ATCC 51142 / BH68</strain>
    </source>
</reference>
<gene>
    <name evidence="1" type="primary">guaA</name>
    <name type="ordered locus">cce_3266</name>
</gene>
<feature type="chain" id="PRO_1000190235" description="GMP synthase [glutamine-hydrolyzing]">
    <location>
        <begin position="1"/>
        <end position="542"/>
    </location>
</feature>
<feature type="domain" description="Glutamine amidotransferase type-1" evidence="1">
    <location>
        <begin position="28"/>
        <end position="218"/>
    </location>
</feature>
<feature type="domain" description="GMPS ATP-PPase" evidence="1">
    <location>
        <begin position="219"/>
        <end position="417"/>
    </location>
</feature>
<feature type="active site" description="Nucleophile" evidence="1">
    <location>
        <position position="105"/>
    </location>
</feature>
<feature type="active site" evidence="1">
    <location>
        <position position="192"/>
    </location>
</feature>
<feature type="active site" evidence="1">
    <location>
        <position position="194"/>
    </location>
</feature>
<feature type="binding site" evidence="1">
    <location>
        <begin position="246"/>
        <end position="252"/>
    </location>
    <ligand>
        <name>ATP</name>
        <dbReference type="ChEBI" id="CHEBI:30616"/>
    </ligand>
</feature>
<accession>B1WY30</accession>
<dbReference type="EC" id="6.3.5.2" evidence="1"/>
<dbReference type="EMBL" id="CP000806">
    <property type="protein sequence ID" value="ACB52614.1"/>
    <property type="molecule type" value="Genomic_DNA"/>
</dbReference>
<dbReference type="RefSeq" id="WP_009547597.1">
    <property type="nucleotide sequence ID" value="NC_010546.1"/>
</dbReference>
<dbReference type="SMR" id="B1WY30"/>
<dbReference type="STRING" id="43989.cce_3266"/>
<dbReference type="MEROPS" id="C26.957"/>
<dbReference type="KEGG" id="cyt:cce_3266"/>
<dbReference type="eggNOG" id="COG0518">
    <property type="taxonomic scope" value="Bacteria"/>
</dbReference>
<dbReference type="eggNOG" id="COG0519">
    <property type="taxonomic scope" value="Bacteria"/>
</dbReference>
<dbReference type="HOGENOM" id="CLU_014340_0_5_3"/>
<dbReference type="OrthoDB" id="9802219at2"/>
<dbReference type="UniPathway" id="UPA00189">
    <property type="reaction ID" value="UER00296"/>
</dbReference>
<dbReference type="Proteomes" id="UP000001203">
    <property type="component" value="Chromosome circular"/>
</dbReference>
<dbReference type="GO" id="GO:0005829">
    <property type="term" value="C:cytosol"/>
    <property type="evidence" value="ECO:0007669"/>
    <property type="project" value="TreeGrafter"/>
</dbReference>
<dbReference type="GO" id="GO:0005524">
    <property type="term" value="F:ATP binding"/>
    <property type="evidence" value="ECO:0007669"/>
    <property type="project" value="UniProtKB-UniRule"/>
</dbReference>
<dbReference type="GO" id="GO:0003921">
    <property type="term" value="F:GMP synthase activity"/>
    <property type="evidence" value="ECO:0007669"/>
    <property type="project" value="InterPro"/>
</dbReference>
<dbReference type="CDD" id="cd01742">
    <property type="entry name" value="GATase1_GMP_Synthase"/>
    <property type="match status" value="1"/>
</dbReference>
<dbReference type="CDD" id="cd01997">
    <property type="entry name" value="GMP_synthase_C"/>
    <property type="match status" value="1"/>
</dbReference>
<dbReference type="FunFam" id="3.30.300.10:FF:000002">
    <property type="entry name" value="GMP synthase [glutamine-hydrolyzing]"/>
    <property type="match status" value="1"/>
</dbReference>
<dbReference type="FunFam" id="3.40.50.620:FF:000001">
    <property type="entry name" value="GMP synthase [glutamine-hydrolyzing]"/>
    <property type="match status" value="1"/>
</dbReference>
<dbReference type="FunFam" id="3.40.50.880:FF:000001">
    <property type="entry name" value="GMP synthase [glutamine-hydrolyzing]"/>
    <property type="match status" value="1"/>
</dbReference>
<dbReference type="Gene3D" id="3.30.300.10">
    <property type="match status" value="1"/>
</dbReference>
<dbReference type="Gene3D" id="3.40.50.880">
    <property type="match status" value="1"/>
</dbReference>
<dbReference type="Gene3D" id="3.40.50.620">
    <property type="entry name" value="HUPs"/>
    <property type="match status" value="1"/>
</dbReference>
<dbReference type="HAMAP" id="MF_00344">
    <property type="entry name" value="GMP_synthase"/>
    <property type="match status" value="1"/>
</dbReference>
<dbReference type="InterPro" id="IPR029062">
    <property type="entry name" value="Class_I_gatase-like"/>
</dbReference>
<dbReference type="InterPro" id="IPR017926">
    <property type="entry name" value="GATASE"/>
</dbReference>
<dbReference type="InterPro" id="IPR001674">
    <property type="entry name" value="GMP_synth_C"/>
</dbReference>
<dbReference type="InterPro" id="IPR004739">
    <property type="entry name" value="GMP_synth_GATase"/>
</dbReference>
<dbReference type="InterPro" id="IPR022955">
    <property type="entry name" value="GMP_synthase"/>
</dbReference>
<dbReference type="InterPro" id="IPR025777">
    <property type="entry name" value="GMPS_ATP_PPase_dom"/>
</dbReference>
<dbReference type="InterPro" id="IPR014729">
    <property type="entry name" value="Rossmann-like_a/b/a_fold"/>
</dbReference>
<dbReference type="NCBIfam" id="TIGR00884">
    <property type="entry name" value="guaA_Cterm"/>
    <property type="match status" value="1"/>
</dbReference>
<dbReference type="NCBIfam" id="TIGR00888">
    <property type="entry name" value="guaA_Nterm"/>
    <property type="match status" value="1"/>
</dbReference>
<dbReference type="NCBIfam" id="NF000848">
    <property type="entry name" value="PRK00074.1"/>
    <property type="match status" value="1"/>
</dbReference>
<dbReference type="PANTHER" id="PTHR11922:SF2">
    <property type="entry name" value="GMP SYNTHASE [GLUTAMINE-HYDROLYZING]"/>
    <property type="match status" value="1"/>
</dbReference>
<dbReference type="PANTHER" id="PTHR11922">
    <property type="entry name" value="GMP SYNTHASE-RELATED"/>
    <property type="match status" value="1"/>
</dbReference>
<dbReference type="Pfam" id="PF00117">
    <property type="entry name" value="GATase"/>
    <property type="match status" value="1"/>
</dbReference>
<dbReference type="Pfam" id="PF00958">
    <property type="entry name" value="GMP_synt_C"/>
    <property type="match status" value="1"/>
</dbReference>
<dbReference type="PRINTS" id="PR00097">
    <property type="entry name" value="ANTSNTHASEII"/>
</dbReference>
<dbReference type="PRINTS" id="PR00099">
    <property type="entry name" value="CPSGATASE"/>
</dbReference>
<dbReference type="PRINTS" id="PR00096">
    <property type="entry name" value="GATASE"/>
</dbReference>
<dbReference type="SUPFAM" id="SSF52402">
    <property type="entry name" value="Adenine nucleotide alpha hydrolases-like"/>
    <property type="match status" value="1"/>
</dbReference>
<dbReference type="SUPFAM" id="SSF52317">
    <property type="entry name" value="Class I glutamine amidotransferase-like"/>
    <property type="match status" value="1"/>
</dbReference>
<dbReference type="SUPFAM" id="SSF54810">
    <property type="entry name" value="GMP synthetase C-terminal dimerisation domain"/>
    <property type="match status" value="1"/>
</dbReference>
<dbReference type="PROSITE" id="PS51273">
    <property type="entry name" value="GATASE_TYPE_1"/>
    <property type="match status" value="1"/>
</dbReference>
<dbReference type="PROSITE" id="PS51553">
    <property type="entry name" value="GMPS_ATP_PPASE"/>
    <property type="match status" value="1"/>
</dbReference>
<keyword id="KW-0067">ATP-binding</keyword>
<keyword id="KW-0315">Glutamine amidotransferase</keyword>
<keyword id="KW-0332">GMP biosynthesis</keyword>
<keyword id="KW-0436">Ligase</keyword>
<keyword id="KW-0547">Nucleotide-binding</keyword>
<keyword id="KW-0658">Purine biosynthesis</keyword>
<keyword id="KW-1185">Reference proteome</keyword>
<comment type="function">
    <text evidence="1">Catalyzes the synthesis of GMP from XMP.</text>
</comment>
<comment type="catalytic activity">
    <reaction evidence="1">
        <text>XMP + L-glutamine + ATP + H2O = GMP + L-glutamate + AMP + diphosphate + 2 H(+)</text>
        <dbReference type="Rhea" id="RHEA:11680"/>
        <dbReference type="ChEBI" id="CHEBI:15377"/>
        <dbReference type="ChEBI" id="CHEBI:15378"/>
        <dbReference type="ChEBI" id="CHEBI:29985"/>
        <dbReference type="ChEBI" id="CHEBI:30616"/>
        <dbReference type="ChEBI" id="CHEBI:33019"/>
        <dbReference type="ChEBI" id="CHEBI:57464"/>
        <dbReference type="ChEBI" id="CHEBI:58115"/>
        <dbReference type="ChEBI" id="CHEBI:58359"/>
        <dbReference type="ChEBI" id="CHEBI:456215"/>
        <dbReference type="EC" id="6.3.5.2"/>
    </reaction>
</comment>
<comment type="pathway">
    <text evidence="1">Purine metabolism; GMP biosynthesis; GMP from XMP (L-Gln route): step 1/1.</text>
</comment>
<comment type="subunit">
    <text evidence="1">Homodimer.</text>
</comment>
<sequence length="542" mass="61309">MTTQTPSLPNKPETLPTNTLDKSLDRQMIVILDFGSQYSELIARRIRETQVYSEVLSYRTTAQKLRQLNPKGIILSGGPNSVYDDRAPQCDPDIWQLGIPVLGVCYGMQLMVKQLGGQVEKALRGEYGKASLRIDDPTDLLTNVEDGSTMWMSHGDSCTRLPEGFSILAHTENTLCAAIADHDKKLFGVQFHPEVVHSVDGIALIRNFVYHICECEPTWTTEAFVDETIREIRAKVRDKRVLLALSGGVDSSTLAFLLHQAIGDNLTCMFIDQGFMRKGEPERLMDIFDKQFHIPVEYVNARDRFLKQLEGVTDPEKKRRLIGHEFIQVFEEESKRLGPFDYLAQGTLYPDVIESADTNIDPKTGERVAVKIKSHHNVGGLPKDLRFKLVEPLRKLFKDEVRKVGRSIGLPEEIVRRHPFPGPGLAIRIIGEVTSERLNILRDADFVVRDEIGKQGMYHDFWQAFAVLLPIRSVGVMGDQRTYAHPIVLRLISSEDGMTADWSRVPYDLLETISNRIVNEVKGVNRVVYDITSKPPGTIEWE</sequence>
<protein>
    <recommendedName>
        <fullName evidence="1">GMP synthase [glutamine-hydrolyzing]</fullName>
        <ecNumber evidence="1">6.3.5.2</ecNumber>
    </recommendedName>
    <alternativeName>
        <fullName evidence="1">GMP synthetase</fullName>
    </alternativeName>
    <alternativeName>
        <fullName evidence="1">Glutamine amidotransferase</fullName>
    </alternativeName>
</protein>
<organism>
    <name type="scientific">Crocosphaera subtropica (strain ATCC 51142 / BH68)</name>
    <name type="common">Cyanothece sp. (strain ATCC 51142)</name>
    <dbReference type="NCBI Taxonomy" id="43989"/>
    <lineage>
        <taxon>Bacteria</taxon>
        <taxon>Bacillati</taxon>
        <taxon>Cyanobacteriota</taxon>
        <taxon>Cyanophyceae</taxon>
        <taxon>Oscillatoriophycideae</taxon>
        <taxon>Chroococcales</taxon>
        <taxon>Aphanothecaceae</taxon>
        <taxon>Crocosphaera</taxon>
        <taxon>Crocosphaera subtropica</taxon>
    </lineage>
</organism>
<evidence type="ECO:0000255" key="1">
    <source>
        <dbReference type="HAMAP-Rule" id="MF_00344"/>
    </source>
</evidence>
<name>GUAA_CROS5</name>
<proteinExistence type="inferred from homology"/>